<dbReference type="EMBL" id="CP000029">
    <property type="protein sequence ID" value="AAW55156.1"/>
    <property type="molecule type" value="Genomic_DNA"/>
</dbReference>
<dbReference type="RefSeq" id="WP_001829782.1">
    <property type="nucleotide sequence ID" value="NC_002976.3"/>
</dbReference>
<dbReference type="SMR" id="Q5HM06"/>
<dbReference type="STRING" id="176279.SERP1824"/>
<dbReference type="GeneID" id="50018080"/>
<dbReference type="KEGG" id="ser:SERP1824"/>
<dbReference type="eggNOG" id="COG0197">
    <property type="taxonomic scope" value="Bacteria"/>
</dbReference>
<dbReference type="HOGENOM" id="CLU_078858_2_1_9"/>
<dbReference type="Proteomes" id="UP000000531">
    <property type="component" value="Chromosome"/>
</dbReference>
<dbReference type="GO" id="GO:0022625">
    <property type="term" value="C:cytosolic large ribosomal subunit"/>
    <property type="evidence" value="ECO:0007669"/>
    <property type="project" value="TreeGrafter"/>
</dbReference>
<dbReference type="GO" id="GO:0019843">
    <property type="term" value="F:rRNA binding"/>
    <property type="evidence" value="ECO:0007669"/>
    <property type="project" value="UniProtKB-UniRule"/>
</dbReference>
<dbReference type="GO" id="GO:0003735">
    <property type="term" value="F:structural constituent of ribosome"/>
    <property type="evidence" value="ECO:0007669"/>
    <property type="project" value="InterPro"/>
</dbReference>
<dbReference type="GO" id="GO:0000049">
    <property type="term" value="F:tRNA binding"/>
    <property type="evidence" value="ECO:0007669"/>
    <property type="project" value="UniProtKB-KW"/>
</dbReference>
<dbReference type="GO" id="GO:0006412">
    <property type="term" value="P:translation"/>
    <property type="evidence" value="ECO:0007669"/>
    <property type="project" value="UniProtKB-UniRule"/>
</dbReference>
<dbReference type="CDD" id="cd01433">
    <property type="entry name" value="Ribosomal_L16_L10e"/>
    <property type="match status" value="1"/>
</dbReference>
<dbReference type="FunFam" id="3.90.1170.10:FF:000001">
    <property type="entry name" value="50S ribosomal protein L16"/>
    <property type="match status" value="1"/>
</dbReference>
<dbReference type="Gene3D" id="3.90.1170.10">
    <property type="entry name" value="Ribosomal protein L10e/L16"/>
    <property type="match status" value="1"/>
</dbReference>
<dbReference type="HAMAP" id="MF_01342">
    <property type="entry name" value="Ribosomal_uL16"/>
    <property type="match status" value="1"/>
</dbReference>
<dbReference type="InterPro" id="IPR047873">
    <property type="entry name" value="Ribosomal_uL16"/>
</dbReference>
<dbReference type="InterPro" id="IPR000114">
    <property type="entry name" value="Ribosomal_uL16_bact-type"/>
</dbReference>
<dbReference type="InterPro" id="IPR020798">
    <property type="entry name" value="Ribosomal_uL16_CS"/>
</dbReference>
<dbReference type="InterPro" id="IPR016180">
    <property type="entry name" value="Ribosomal_uL16_dom"/>
</dbReference>
<dbReference type="InterPro" id="IPR036920">
    <property type="entry name" value="Ribosomal_uL16_sf"/>
</dbReference>
<dbReference type="NCBIfam" id="TIGR01164">
    <property type="entry name" value="rplP_bact"/>
    <property type="match status" value="1"/>
</dbReference>
<dbReference type="PANTHER" id="PTHR12220">
    <property type="entry name" value="50S/60S RIBOSOMAL PROTEIN L16"/>
    <property type="match status" value="1"/>
</dbReference>
<dbReference type="PANTHER" id="PTHR12220:SF13">
    <property type="entry name" value="LARGE RIBOSOMAL SUBUNIT PROTEIN UL16M"/>
    <property type="match status" value="1"/>
</dbReference>
<dbReference type="Pfam" id="PF00252">
    <property type="entry name" value="Ribosomal_L16"/>
    <property type="match status" value="1"/>
</dbReference>
<dbReference type="PRINTS" id="PR00060">
    <property type="entry name" value="RIBOSOMALL16"/>
</dbReference>
<dbReference type="SUPFAM" id="SSF54686">
    <property type="entry name" value="Ribosomal protein L16p/L10e"/>
    <property type="match status" value="1"/>
</dbReference>
<dbReference type="PROSITE" id="PS00586">
    <property type="entry name" value="RIBOSOMAL_L16_1"/>
    <property type="match status" value="1"/>
</dbReference>
<dbReference type="PROSITE" id="PS00701">
    <property type="entry name" value="RIBOSOMAL_L16_2"/>
    <property type="match status" value="1"/>
</dbReference>
<comment type="function">
    <text evidence="1">Binds 23S rRNA and is also seen to make contacts with the A and possibly P site tRNAs.</text>
</comment>
<comment type="subunit">
    <text evidence="1">Part of the 50S ribosomal subunit.</text>
</comment>
<comment type="similarity">
    <text evidence="1">Belongs to the universal ribosomal protein uL16 family.</text>
</comment>
<sequence length="144" mass="16254">MLLPKRVKYRRQHRPKTTGRSKGGNYVTFGEYGLQATTTSWITSRQIESARIAMTRYMKRGGKVWIKIFPHTPYTKKPLEVRMGAGKGAVEGWIAVVKPGRILFEVAGVPEEVAREALRLASHKLPVKSKFVKREELGGETNES</sequence>
<accession>Q5HM06</accession>
<feature type="chain" id="PRO_0000062210" description="Large ribosomal subunit protein uL16">
    <location>
        <begin position="1"/>
        <end position="144"/>
    </location>
</feature>
<feature type="region of interest" description="Disordered" evidence="2">
    <location>
        <begin position="1"/>
        <end position="23"/>
    </location>
</feature>
<feature type="compositionally biased region" description="Basic residues" evidence="2">
    <location>
        <begin position="1"/>
        <end position="19"/>
    </location>
</feature>
<proteinExistence type="inferred from homology"/>
<organism>
    <name type="scientific">Staphylococcus epidermidis (strain ATCC 35984 / DSM 28319 / BCRC 17069 / CCUG 31568 / BM 3577 / RP62A)</name>
    <dbReference type="NCBI Taxonomy" id="176279"/>
    <lineage>
        <taxon>Bacteria</taxon>
        <taxon>Bacillati</taxon>
        <taxon>Bacillota</taxon>
        <taxon>Bacilli</taxon>
        <taxon>Bacillales</taxon>
        <taxon>Staphylococcaceae</taxon>
        <taxon>Staphylococcus</taxon>
    </lineage>
</organism>
<keyword id="KW-1185">Reference proteome</keyword>
<keyword id="KW-0687">Ribonucleoprotein</keyword>
<keyword id="KW-0689">Ribosomal protein</keyword>
<keyword id="KW-0694">RNA-binding</keyword>
<keyword id="KW-0699">rRNA-binding</keyword>
<keyword id="KW-0820">tRNA-binding</keyword>
<reference key="1">
    <citation type="journal article" date="2005" name="J. Bacteriol.">
        <title>Insights on evolution of virulence and resistance from the complete genome analysis of an early methicillin-resistant Staphylococcus aureus strain and a biofilm-producing methicillin-resistant Staphylococcus epidermidis strain.</title>
        <authorList>
            <person name="Gill S.R."/>
            <person name="Fouts D.E."/>
            <person name="Archer G.L."/>
            <person name="Mongodin E.F."/>
            <person name="DeBoy R.T."/>
            <person name="Ravel J."/>
            <person name="Paulsen I.T."/>
            <person name="Kolonay J.F."/>
            <person name="Brinkac L.M."/>
            <person name="Beanan M.J."/>
            <person name="Dodson R.J."/>
            <person name="Daugherty S.C."/>
            <person name="Madupu R."/>
            <person name="Angiuoli S.V."/>
            <person name="Durkin A.S."/>
            <person name="Haft D.H."/>
            <person name="Vamathevan J.J."/>
            <person name="Khouri H."/>
            <person name="Utterback T.R."/>
            <person name="Lee C."/>
            <person name="Dimitrov G."/>
            <person name="Jiang L."/>
            <person name="Qin H."/>
            <person name="Weidman J."/>
            <person name="Tran K."/>
            <person name="Kang K.H."/>
            <person name="Hance I.R."/>
            <person name="Nelson K.E."/>
            <person name="Fraser C.M."/>
        </authorList>
    </citation>
    <scope>NUCLEOTIDE SEQUENCE [LARGE SCALE GENOMIC DNA]</scope>
    <source>
        <strain>ATCC 35984 / DSM 28319 / BCRC 17069 / CCUG 31568 / BM 3577 / RP62A</strain>
    </source>
</reference>
<evidence type="ECO:0000255" key="1">
    <source>
        <dbReference type="HAMAP-Rule" id="MF_01342"/>
    </source>
</evidence>
<evidence type="ECO:0000256" key="2">
    <source>
        <dbReference type="SAM" id="MobiDB-lite"/>
    </source>
</evidence>
<evidence type="ECO:0000305" key="3"/>
<name>RL16_STAEQ</name>
<gene>
    <name evidence="1" type="primary">rplP</name>
    <name type="ordered locus">SERP1824</name>
</gene>
<protein>
    <recommendedName>
        <fullName evidence="1">Large ribosomal subunit protein uL16</fullName>
    </recommendedName>
    <alternativeName>
        <fullName evidence="3">50S ribosomal protein L16</fullName>
    </alternativeName>
</protein>